<sequence>MEYSYPLNPDWTTEEMTIVVQFLEAIERAYEKGIDTLELKEKYRAFKQVVPAKGEEKRIGIDFEKASGYSAYKVMQLVKNATTSKIKMQP</sequence>
<gene>
    <name type="ordered locus">Lm4b_01078</name>
</gene>
<reference key="1">
    <citation type="journal article" date="2012" name="BMC Genomics">
        <title>Comparative genomics and transcriptomics of lineages I, II, and III strains of Listeria monocytogenes.</title>
        <authorList>
            <person name="Hain T."/>
            <person name="Ghai R."/>
            <person name="Billion A."/>
            <person name="Kuenne C.T."/>
            <person name="Steinweg C."/>
            <person name="Izar B."/>
            <person name="Mohamed W."/>
            <person name="Mraheil M."/>
            <person name="Domann E."/>
            <person name="Schaffrath S."/>
            <person name="Karst U."/>
            <person name="Goesmann A."/>
            <person name="Oehm S."/>
            <person name="Puhler A."/>
            <person name="Merkl R."/>
            <person name="Vorwerk S."/>
            <person name="Glaser P."/>
            <person name="Garrido P."/>
            <person name="Rusniok C."/>
            <person name="Buchrieser C."/>
            <person name="Goebel W."/>
            <person name="Chakraborty T."/>
        </authorList>
    </citation>
    <scope>NUCLEOTIDE SEQUENCE [LARGE SCALE GENOMIC DNA]</scope>
    <source>
        <strain>CLIP80459</strain>
    </source>
</reference>
<name>Y1078_LISMC</name>
<evidence type="ECO:0000255" key="1">
    <source>
        <dbReference type="HAMAP-Rule" id="MF_01041"/>
    </source>
</evidence>
<accession>C1L1X9</accession>
<organism>
    <name type="scientific">Listeria monocytogenes serotype 4b (strain CLIP80459)</name>
    <dbReference type="NCBI Taxonomy" id="568819"/>
    <lineage>
        <taxon>Bacteria</taxon>
        <taxon>Bacillati</taxon>
        <taxon>Bacillota</taxon>
        <taxon>Bacilli</taxon>
        <taxon>Bacillales</taxon>
        <taxon>Listeriaceae</taxon>
        <taxon>Listeria</taxon>
    </lineage>
</organism>
<dbReference type="EMBL" id="FM242711">
    <property type="protein sequence ID" value="CAS04844.1"/>
    <property type="molecule type" value="Genomic_DNA"/>
</dbReference>
<dbReference type="RefSeq" id="WP_003722685.1">
    <property type="nucleotide sequence ID" value="NC_012488.1"/>
</dbReference>
<dbReference type="SMR" id="C1L1X9"/>
<dbReference type="KEGG" id="lmc:Lm4b_01078"/>
<dbReference type="HOGENOM" id="CLU_166693_1_0_9"/>
<dbReference type="Gene3D" id="1.10.220.80">
    <property type="entry name" value="BH2638-like"/>
    <property type="match status" value="1"/>
</dbReference>
<dbReference type="HAMAP" id="MF_01041">
    <property type="entry name" value="UPF0223"/>
    <property type="match status" value="1"/>
</dbReference>
<dbReference type="InterPro" id="IPR023324">
    <property type="entry name" value="BH2638-like_sf"/>
</dbReference>
<dbReference type="InterPro" id="IPR007920">
    <property type="entry name" value="UPF0223"/>
</dbReference>
<dbReference type="NCBIfam" id="NF003353">
    <property type="entry name" value="PRK04387.1"/>
    <property type="match status" value="1"/>
</dbReference>
<dbReference type="Pfam" id="PF05256">
    <property type="entry name" value="UPF0223"/>
    <property type="match status" value="1"/>
</dbReference>
<dbReference type="PIRSF" id="PIRSF037260">
    <property type="entry name" value="UPF0223"/>
    <property type="match status" value="1"/>
</dbReference>
<dbReference type="SUPFAM" id="SSF158504">
    <property type="entry name" value="BH2638-like"/>
    <property type="match status" value="1"/>
</dbReference>
<protein>
    <recommendedName>
        <fullName evidence="1">UPF0223 protein Lm4b_01078</fullName>
    </recommendedName>
</protein>
<comment type="similarity">
    <text evidence="1">Belongs to the UPF0223 family.</text>
</comment>
<proteinExistence type="inferred from homology"/>
<feature type="chain" id="PRO_1000213399" description="UPF0223 protein Lm4b_01078">
    <location>
        <begin position="1"/>
        <end position="90"/>
    </location>
</feature>